<reference key="1">
    <citation type="journal article" date="2009" name="PLoS Genet.">
        <title>Organised genome dynamics in the Escherichia coli species results in highly diverse adaptive paths.</title>
        <authorList>
            <person name="Touchon M."/>
            <person name="Hoede C."/>
            <person name="Tenaillon O."/>
            <person name="Barbe V."/>
            <person name="Baeriswyl S."/>
            <person name="Bidet P."/>
            <person name="Bingen E."/>
            <person name="Bonacorsi S."/>
            <person name="Bouchier C."/>
            <person name="Bouvet O."/>
            <person name="Calteau A."/>
            <person name="Chiapello H."/>
            <person name="Clermont O."/>
            <person name="Cruveiller S."/>
            <person name="Danchin A."/>
            <person name="Diard M."/>
            <person name="Dossat C."/>
            <person name="Karoui M.E."/>
            <person name="Frapy E."/>
            <person name="Garry L."/>
            <person name="Ghigo J.M."/>
            <person name="Gilles A.M."/>
            <person name="Johnson J."/>
            <person name="Le Bouguenec C."/>
            <person name="Lescat M."/>
            <person name="Mangenot S."/>
            <person name="Martinez-Jehanne V."/>
            <person name="Matic I."/>
            <person name="Nassif X."/>
            <person name="Oztas S."/>
            <person name="Petit M.A."/>
            <person name="Pichon C."/>
            <person name="Rouy Z."/>
            <person name="Ruf C.S."/>
            <person name="Schneider D."/>
            <person name="Tourret J."/>
            <person name="Vacherie B."/>
            <person name="Vallenet D."/>
            <person name="Medigue C."/>
            <person name="Rocha E.P.C."/>
            <person name="Denamur E."/>
        </authorList>
    </citation>
    <scope>NUCLEOTIDE SEQUENCE [LARGE SCALE GENOMIC DNA]</scope>
    <source>
        <strain>ATCC 35469 / DSM 13698 / BCRC 15582 / CCUG 18766 / IAM 14443 / JCM 21226 / LMG 7866 / NBRC 102419 / NCTC 12128 / CDC 0568-73</strain>
    </source>
</reference>
<feature type="chain" id="PRO_1000118611" description="4-hydroxy-3-methylbut-2-enyl diphosphate reductase">
    <location>
        <begin position="1"/>
        <end position="316"/>
    </location>
</feature>
<feature type="active site" description="Proton donor" evidence="1">
    <location>
        <position position="126"/>
    </location>
</feature>
<feature type="binding site" evidence="1">
    <location>
        <position position="12"/>
    </location>
    <ligand>
        <name>[4Fe-4S] cluster</name>
        <dbReference type="ChEBI" id="CHEBI:49883"/>
    </ligand>
</feature>
<feature type="binding site" evidence="1">
    <location>
        <position position="41"/>
    </location>
    <ligand>
        <name>(2E)-4-hydroxy-3-methylbut-2-enyl diphosphate</name>
        <dbReference type="ChEBI" id="CHEBI:128753"/>
    </ligand>
</feature>
<feature type="binding site" evidence="1">
    <location>
        <position position="41"/>
    </location>
    <ligand>
        <name>dimethylallyl diphosphate</name>
        <dbReference type="ChEBI" id="CHEBI:57623"/>
    </ligand>
</feature>
<feature type="binding site" evidence="1">
    <location>
        <position position="41"/>
    </location>
    <ligand>
        <name>isopentenyl diphosphate</name>
        <dbReference type="ChEBI" id="CHEBI:128769"/>
    </ligand>
</feature>
<feature type="binding site" evidence="1">
    <location>
        <position position="74"/>
    </location>
    <ligand>
        <name>(2E)-4-hydroxy-3-methylbut-2-enyl diphosphate</name>
        <dbReference type="ChEBI" id="CHEBI:128753"/>
    </ligand>
</feature>
<feature type="binding site" evidence="1">
    <location>
        <position position="74"/>
    </location>
    <ligand>
        <name>dimethylallyl diphosphate</name>
        <dbReference type="ChEBI" id="CHEBI:57623"/>
    </ligand>
</feature>
<feature type="binding site" evidence="1">
    <location>
        <position position="74"/>
    </location>
    <ligand>
        <name>isopentenyl diphosphate</name>
        <dbReference type="ChEBI" id="CHEBI:128769"/>
    </ligand>
</feature>
<feature type="binding site" evidence="1">
    <location>
        <position position="96"/>
    </location>
    <ligand>
        <name>[4Fe-4S] cluster</name>
        <dbReference type="ChEBI" id="CHEBI:49883"/>
    </ligand>
</feature>
<feature type="binding site" evidence="1">
    <location>
        <position position="124"/>
    </location>
    <ligand>
        <name>(2E)-4-hydroxy-3-methylbut-2-enyl diphosphate</name>
        <dbReference type="ChEBI" id="CHEBI:128753"/>
    </ligand>
</feature>
<feature type="binding site" evidence="1">
    <location>
        <position position="124"/>
    </location>
    <ligand>
        <name>dimethylallyl diphosphate</name>
        <dbReference type="ChEBI" id="CHEBI:57623"/>
    </ligand>
</feature>
<feature type="binding site" evidence="1">
    <location>
        <position position="124"/>
    </location>
    <ligand>
        <name>isopentenyl diphosphate</name>
        <dbReference type="ChEBI" id="CHEBI:128769"/>
    </ligand>
</feature>
<feature type="binding site" evidence="1">
    <location>
        <position position="167"/>
    </location>
    <ligand>
        <name>(2E)-4-hydroxy-3-methylbut-2-enyl diphosphate</name>
        <dbReference type="ChEBI" id="CHEBI:128753"/>
    </ligand>
</feature>
<feature type="binding site" evidence="1">
    <location>
        <position position="197"/>
    </location>
    <ligand>
        <name>[4Fe-4S] cluster</name>
        <dbReference type="ChEBI" id="CHEBI:49883"/>
    </ligand>
</feature>
<feature type="binding site" evidence="1">
    <location>
        <position position="225"/>
    </location>
    <ligand>
        <name>(2E)-4-hydroxy-3-methylbut-2-enyl diphosphate</name>
        <dbReference type="ChEBI" id="CHEBI:128753"/>
    </ligand>
</feature>
<feature type="binding site" evidence="1">
    <location>
        <position position="225"/>
    </location>
    <ligand>
        <name>dimethylallyl diphosphate</name>
        <dbReference type="ChEBI" id="CHEBI:57623"/>
    </ligand>
</feature>
<feature type="binding site" evidence="1">
    <location>
        <position position="225"/>
    </location>
    <ligand>
        <name>isopentenyl diphosphate</name>
        <dbReference type="ChEBI" id="CHEBI:128769"/>
    </ligand>
</feature>
<feature type="binding site" evidence="1">
    <location>
        <position position="226"/>
    </location>
    <ligand>
        <name>(2E)-4-hydroxy-3-methylbut-2-enyl diphosphate</name>
        <dbReference type="ChEBI" id="CHEBI:128753"/>
    </ligand>
</feature>
<feature type="binding site" evidence="1">
    <location>
        <position position="226"/>
    </location>
    <ligand>
        <name>dimethylallyl diphosphate</name>
        <dbReference type="ChEBI" id="CHEBI:57623"/>
    </ligand>
</feature>
<feature type="binding site" evidence="1">
    <location>
        <position position="226"/>
    </location>
    <ligand>
        <name>isopentenyl diphosphate</name>
        <dbReference type="ChEBI" id="CHEBI:128769"/>
    </ligand>
</feature>
<feature type="binding site" evidence="1">
    <location>
        <position position="227"/>
    </location>
    <ligand>
        <name>(2E)-4-hydroxy-3-methylbut-2-enyl diphosphate</name>
        <dbReference type="ChEBI" id="CHEBI:128753"/>
    </ligand>
</feature>
<feature type="binding site" evidence="1">
    <location>
        <position position="227"/>
    </location>
    <ligand>
        <name>dimethylallyl diphosphate</name>
        <dbReference type="ChEBI" id="CHEBI:57623"/>
    </ligand>
</feature>
<feature type="binding site" evidence="1">
    <location>
        <position position="227"/>
    </location>
    <ligand>
        <name>isopentenyl diphosphate</name>
        <dbReference type="ChEBI" id="CHEBI:128769"/>
    </ligand>
</feature>
<feature type="binding site" evidence="1">
    <location>
        <position position="269"/>
    </location>
    <ligand>
        <name>(2E)-4-hydroxy-3-methylbut-2-enyl diphosphate</name>
        <dbReference type="ChEBI" id="CHEBI:128753"/>
    </ligand>
</feature>
<feature type="binding site" evidence="1">
    <location>
        <position position="269"/>
    </location>
    <ligand>
        <name>dimethylallyl diphosphate</name>
        <dbReference type="ChEBI" id="CHEBI:57623"/>
    </ligand>
</feature>
<feature type="binding site" evidence="1">
    <location>
        <position position="269"/>
    </location>
    <ligand>
        <name>isopentenyl diphosphate</name>
        <dbReference type="ChEBI" id="CHEBI:128769"/>
    </ligand>
</feature>
<sequence length="316" mass="34775">MQILLANPRGFCAGVDRAISIVENALAIYGAPIYVRHEVVHNRYVVDSLRERGAIFIEQISEVPDGAILIFSAHGVSQAVRNEAKSRDLTVFDATCPLVTKVHMEVARASRRGEESILIGHAGHPEVEGTMGQYSNPEGGMYLVESPDDVWKLTVKNEEKLSFMTQTTLSVDDTSDVIDALRKRFPKIVGPRKDDICYATTNRQEAVRALAEQAEVVLVVGSKNSSNSNRLAELAQRMGKRAFLIDDAKDIQEEWVKEVKCVGVTAGASAPDILVQNVVARLQQLGGGEAIPLEGREENIVFEVPKELRVDIREVD</sequence>
<protein>
    <recommendedName>
        <fullName evidence="1">4-hydroxy-3-methylbut-2-enyl diphosphate reductase</fullName>
        <shortName evidence="1">HMBPP reductase</shortName>
        <ecNumber evidence="1">1.17.7.4</ecNumber>
    </recommendedName>
</protein>
<proteinExistence type="inferred from homology"/>
<keyword id="KW-0004">4Fe-4S</keyword>
<keyword id="KW-0408">Iron</keyword>
<keyword id="KW-0411">Iron-sulfur</keyword>
<keyword id="KW-0414">Isoprene biosynthesis</keyword>
<keyword id="KW-0479">Metal-binding</keyword>
<keyword id="KW-0560">Oxidoreductase</keyword>
<evidence type="ECO:0000255" key="1">
    <source>
        <dbReference type="HAMAP-Rule" id="MF_00191"/>
    </source>
</evidence>
<organism>
    <name type="scientific">Escherichia fergusonii (strain ATCC 35469 / DSM 13698 / CCUG 18766 / IAM 14443 / JCM 21226 / LMG 7866 / NBRC 102419 / NCTC 12128 / CDC 0568-73)</name>
    <dbReference type="NCBI Taxonomy" id="585054"/>
    <lineage>
        <taxon>Bacteria</taxon>
        <taxon>Pseudomonadati</taxon>
        <taxon>Pseudomonadota</taxon>
        <taxon>Gammaproteobacteria</taxon>
        <taxon>Enterobacterales</taxon>
        <taxon>Enterobacteriaceae</taxon>
        <taxon>Escherichia</taxon>
    </lineage>
</organism>
<gene>
    <name evidence="1" type="primary">ispH</name>
    <name type="ordered locus">EFER_0022</name>
</gene>
<comment type="function">
    <text evidence="1">Catalyzes the conversion of 1-hydroxy-2-methyl-2-(E)-butenyl 4-diphosphate (HMBPP) into a mixture of isopentenyl diphosphate (IPP) and dimethylallyl diphosphate (DMAPP). Acts in the terminal step of the DOXP/MEP pathway for isoprenoid precursor biosynthesis.</text>
</comment>
<comment type="catalytic activity">
    <reaction evidence="1">
        <text>isopentenyl diphosphate + 2 oxidized [2Fe-2S]-[ferredoxin] + H2O = (2E)-4-hydroxy-3-methylbut-2-enyl diphosphate + 2 reduced [2Fe-2S]-[ferredoxin] + 2 H(+)</text>
        <dbReference type="Rhea" id="RHEA:24488"/>
        <dbReference type="Rhea" id="RHEA-COMP:10000"/>
        <dbReference type="Rhea" id="RHEA-COMP:10001"/>
        <dbReference type="ChEBI" id="CHEBI:15377"/>
        <dbReference type="ChEBI" id="CHEBI:15378"/>
        <dbReference type="ChEBI" id="CHEBI:33737"/>
        <dbReference type="ChEBI" id="CHEBI:33738"/>
        <dbReference type="ChEBI" id="CHEBI:128753"/>
        <dbReference type="ChEBI" id="CHEBI:128769"/>
        <dbReference type="EC" id="1.17.7.4"/>
    </reaction>
</comment>
<comment type="catalytic activity">
    <reaction evidence="1">
        <text>dimethylallyl diphosphate + 2 oxidized [2Fe-2S]-[ferredoxin] + H2O = (2E)-4-hydroxy-3-methylbut-2-enyl diphosphate + 2 reduced [2Fe-2S]-[ferredoxin] + 2 H(+)</text>
        <dbReference type="Rhea" id="RHEA:24825"/>
        <dbReference type="Rhea" id="RHEA-COMP:10000"/>
        <dbReference type="Rhea" id="RHEA-COMP:10001"/>
        <dbReference type="ChEBI" id="CHEBI:15377"/>
        <dbReference type="ChEBI" id="CHEBI:15378"/>
        <dbReference type="ChEBI" id="CHEBI:33737"/>
        <dbReference type="ChEBI" id="CHEBI:33738"/>
        <dbReference type="ChEBI" id="CHEBI:57623"/>
        <dbReference type="ChEBI" id="CHEBI:128753"/>
        <dbReference type="EC" id="1.17.7.4"/>
    </reaction>
</comment>
<comment type="cofactor">
    <cofactor evidence="1">
        <name>[4Fe-4S] cluster</name>
        <dbReference type="ChEBI" id="CHEBI:49883"/>
    </cofactor>
    <text evidence="1">Binds 1 [4Fe-4S] cluster per subunit.</text>
</comment>
<comment type="pathway">
    <text evidence="1">Isoprenoid biosynthesis; dimethylallyl diphosphate biosynthesis; dimethylallyl diphosphate from (2E)-4-hydroxy-3-methylbutenyl diphosphate: step 1/1.</text>
</comment>
<comment type="pathway">
    <text evidence="1">Isoprenoid biosynthesis; isopentenyl diphosphate biosynthesis via DXP pathway; isopentenyl diphosphate from 1-deoxy-D-xylulose 5-phosphate: step 6/6.</text>
</comment>
<comment type="subunit">
    <text evidence="1">Homodimer.</text>
</comment>
<comment type="similarity">
    <text evidence="1">Belongs to the IspH family.</text>
</comment>
<name>ISPH_ESCF3</name>
<accession>B7LVN5</accession>
<dbReference type="EC" id="1.17.7.4" evidence="1"/>
<dbReference type="EMBL" id="CU928158">
    <property type="protein sequence ID" value="CAQ87609.1"/>
    <property type="molecule type" value="Genomic_DNA"/>
</dbReference>
<dbReference type="RefSeq" id="WP_001166395.1">
    <property type="nucleotide sequence ID" value="NC_011740.1"/>
</dbReference>
<dbReference type="SMR" id="B7LVN5"/>
<dbReference type="GeneID" id="93777407"/>
<dbReference type="KEGG" id="efe:EFER_0022"/>
<dbReference type="HOGENOM" id="CLU_027486_1_0_6"/>
<dbReference type="OrthoDB" id="9804068at2"/>
<dbReference type="UniPathway" id="UPA00056">
    <property type="reaction ID" value="UER00097"/>
</dbReference>
<dbReference type="UniPathway" id="UPA00059">
    <property type="reaction ID" value="UER00105"/>
</dbReference>
<dbReference type="Proteomes" id="UP000000745">
    <property type="component" value="Chromosome"/>
</dbReference>
<dbReference type="GO" id="GO:0051539">
    <property type="term" value="F:4 iron, 4 sulfur cluster binding"/>
    <property type="evidence" value="ECO:0007669"/>
    <property type="project" value="UniProtKB-UniRule"/>
</dbReference>
<dbReference type="GO" id="GO:0051745">
    <property type="term" value="F:4-hydroxy-3-methylbut-2-enyl diphosphate reductase activity"/>
    <property type="evidence" value="ECO:0007669"/>
    <property type="project" value="UniProtKB-UniRule"/>
</dbReference>
<dbReference type="GO" id="GO:0046872">
    <property type="term" value="F:metal ion binding"/>
    <property type="evidence" value="ECO:0007669"/>
    <property type="project" value="UniProtKB-KW"/>
</dbReference>
<dbReference type="GO" id="GO:0050992">
    <property type="term" value="P:dimethylallyl diphosphate biosynthetic process"/>
    <property type="evidence" value="ECO:0007669"/>
    <property type="project" value="UniProtKB-UniRule"/>
</dbReference>
<dbReference type="GO" id="GO:0019288">
    <property type="term" value="P:isopentenyl diphosphate biosynthetic process, methylerythritol 4-phosphate pathway"/>
    <property type="evidence" value="ECO:0007669"/>
    <property type="project" value="UniProtKB-UniRule"/>
</dbReference>
<dbReference type="GO" id="GO:0016114">
    <property type="term" value="P:terpenoid biosynthetic process"/>
    <property type="evidence" value="ECO:0007669"/>
    <property type="project" value="UniProtKB-UniRule"/>
</dbReference>
<dbReference type="CDD" id="cd13944">
    <property type="entry name" value="lytB_ispH"/>
    <property type="match status" value="1"/>
</dbReference>
<dbReference type="FunFam" id="3.40.1010.20:FF:000001">
    <property type="entry name" value="4-hydroxy-3-methylbut-2-enyl diphosphate reductase"/>
    <property type="match status" value="1"/>
</dbReference>
<dbReference type="FunFam" id="3.40.50.11270:FF:000001">
    <property type="entry name" value="4-hydroxy-3-methylbut-2-enyl diphosphate reductase"/>
    <property type="match status" value="1"/>
</dbReference>
<dbReference type="Gene3D" id="3.40.50.11270">
    <property type="match status" value="1"/>
</dbReference>
<dbReference type="Gene3D" id="3.40.1010.20">
    <property type="entry name" value="4-hydroxy-3-methylbut-2-enyl diphosphate reductase, catalytic domain"/>
    <property type="match status" value="2"/>
</dbReference>
<dbReference type="HAMAP" id="MF_00191">
    <property type="entry name" value="IspH"/>
    <property type="match status" value="1"/>
</dbReference>
<dbReference type="InterPro" id="IPR003451">
    <property type="entry name" value="LytB/IspH"/>
</dbReference>
<dbReference type="NCBIfam" id="TIGR00216">
    <property type="entry name" value="ispH_lytB"/>
    <property type="match status" value="1"/>
</dbReference>
<dbReference type="NCBIfam" id="NF002188">
    <property type="entry name" value="PRK01045.1-2"/>
    <property type="match status" value="1"/>
</dbReference>
<dbReference type="NCBIfam" id="NF002190">
    <property type="entry name" value="PRK01045.1-4"/>
    <property type="match status" value="1"/>
</dbReference>
<dbReference type="PANTHER" id="PTHR30426">
    <property type="entry name" value="4-HYDROXY-3-METHYLBUT-2-ENYL DIPHOSPHATE REDUCTASE"/>
    <property type="match status" value="1"/>
</dbReference>
<dbReference type="PANTHER" id="PTHR30426:SF0">
    <property type="entry name" value="4-HYDROXY-3-METHYLBUT-2-ENYL DIPHOSPHATE REDUCTASE"/>
    <property type="match status" value="1"/>
</dbReference>
<dbReference type="Pfam" id="PF02401">
    <property type="entry name" value="LYTB"/>
    <property type="match status" value="1"/>
</dbReference>